<name>RL23_RICAE</name>
<feature type="chain" id="PRO_1000215043" description="Large ribosomal subunit protein uL23">
    <location>
        <begin position="1"/>
        <end position="98"/>
    </location>
</feature>
<comment type="function">
    <text evidence="1">One of the early assembly proteins it binds 23S rRNA. One of the proteins that surrounds the polypeptide exit tunnel on the outside of the ribosome. Forms the main docking site for trigger factor binding to the ribosome.</text>
</comment>
<comment type="subunit">
    <text evidence="1">Part of the 50S ribosomal subunit. Contacts protein L29, and trigger factor when it is bound to the ribosome.</text>
</comment>
<comment type="similarity">
    <text evidence="1">Belongs to the universal ribosomal protein uL23 family.</text>
</comment>
<dbReference type="EMBL" id="CP001612">
    <property type="protein sequence ID" value="ACP53765.1"/>
    <property type="molecule type" value="Genomic_DNA"/>
</dbReference>
<dbReference type="RefSeq" id="WP_010977586.1">
    <property type="nucleotide sequence ID" value="NC_012633.1"/>
</dbReference>
<dbReference type="SMR" id="C3PPA5"/>
<dbReference type="GeneID" id="928146"/>
<dbReference type="KEGG" id="raf:RAF_ORF0910"/>
<dbReference type="HOGENOM" id="CLU_037562_3_2_5"/>
<dbReference type="Proteomes" id="UP000002305">
    <property type="component" value="Chromosome"/>
</dbReference>
<dbReference type="GO" id="GO:1990904">
    <property type="term" value="C:ribonucleoprotein complex"/>
    <property type="evidence" value="ECO:0007669"/>
    <property type="project" value="UniProtKB-KW"/>
</dbReference>
<dbReference type="GO" id="GO:0005840">
    <property type="term" value="C:ribosome"/>
    <property type="evidence" value="ECO:0007669"/>
    <property type="project" value="UniProtKB-KW"/>
</dbReference>
<dbReference type="GO" id="GO:0019843">
    <property type="term" value="F:rRNA binding"/>
    <property type="evidence" value="ECO:0007669"/>
    <property type="project" value="UniProtKB-UniRule"/>
</dbReference>
<dbReference type="GO" id="GO:0003735">
    <property type="term" value="F:structural constituent of ribosome"/>
    <property type="evidence" value="ECO:0007669"/>
    <property type="project" value="InterPro"/>
</dbReference>
<dbReference type="GO" id="GO:0006412">
    <property type="term" value="P:translation"/>
    <property type="evidence" value="ECO:0007669"/>
    <property type="project" value="UniProtKB-UniRule"/>
</dbReference>
<dbReference type="FunFam" id="3.30.70.330:FF:000001">
    <property type="entry name" value="50S ribosomal protein L23"/>
    <property type="match status" value="1"/>
</dbReference>
<dbReference type="Gene3D" id="3.30.70.330">
    <property type="match status" value="1"/>
</dbReference>
<dbReference type="HAMAP" id="MF_01369_B">
    <property type="entry name" value="Ribosomal_uL23_B"/>
    <property type="match status" value="1"/>
</dbReference>
<dbReference type="InterPro" id="IPR012677">
    <property type="entry name" value="Nucleotide-bd_a/b_plait_sf"/>
</dbReference>
<dbReference type="InterPro" id="IPR013025">
    <property type="entry name" value="Ribosomal_uL23-like"/>
</dbReference>
<dbReference type="InterPro" id="IPR012678">
    <property type="entry name" value="Ribosomal_uL23/eL15/eS24_sf"/>
</dbReference>
<dbReference type="NCBIfam" id="NF004359">
    <property type="entry name" value="PRK05738.1-3"/>
    <property type="match status" value="1"/>
</dbReference>
<dbReference type="NCBIfam" id="NF004363">
    <property type="entry name" value="PRK05738.2-4"/>
    <property type="match status" value="1"/>
</dbReference>
<dbReference type="PANTHER" id="PTHR11620">
    <property type="entry name" value="60S RIBOSOMAL PROTEIN L23A"/>
    <property type="match status" value="1"/>
</dbReference>
<dbReference type="Pfam" id="PF00276">
    <property type="entry name" value="Ribosomal_L23"/>
    <property type="match status" value="1"/>
</dbReference>
<dbReference type="SUPFAM" id="SSF54189">
    <property type="entry name" value="Ribosomal proteins S24e, L23 and L15e"/>
    <property type="match status" value="1"/>
</dbReference>
<organism>
    <name type="scientific">Rickettsia africae (strain ESF-5)</name>
    <dbReference type="NCBI Taxonomy" id="347255"/>
    <lineage>
        <taxon>Bacteria</taxon>
        <taxon>Pseudomonadati</taxon>
        <taxon>Pseudomonadota</taxon>
        <taxon>Alphaproteobacteria</taxon>
        <taxon>Rickettsiales</taxon>
        <taxon>Rickettsiaceae</taxon>
        <taxon>Rickettsieae</taxon>
        <taxon>Rickettsia</taxon>
        <taxon>spotted fever group</taxon>
    </lineage>
</organism>
<sequence>MSSYKYYDLIRKPIITEKTTTLSEQNKYAFYVDKFAKKLTLKKAIEEIFKVKVKKVNILNVKGKKKRFKGIIGTQINRKKAIVTLEKDHNIDFAGGIK</sequence>
<keyword id="KW-0687">Ribonucleoprotein</keyword>
<keyword id="KW-0689">Ribosomal protein</keyword>
<keyword id="KW-0694">RNA-binding</keyword>
<keyword id="KW-0699">rRNA-binding</keyword>
<proteinExistence type="inferred from homology"/>
<gene>
    <name evidence="1" type="primary">rplW</name>
    <name type="ordered locus">RAF_ORF0910</name>
</gene>
<evidence type="ECO:0000255" key="1">
    <source>
        <dbReference type="HAMAP-Rule" id="MF_01369"/>
    </source>
</evidence>
<evidence type="ECO:0000305" key="2"/>
<protein>
    <recommendedName>
        <fullName evidence="1">Large ribosomal subunit protein uL23</fullName>
    </recommendedName>
    <alternativeName>
        <fullName evidence="2">50S ribosomal protein L23</fullName>
    </alternativeName>
</protein>
<accession>C3PPA5</accession>
<reference key="1">
    <citation type="journal article" date="2009" name="BMC Genomics">
        <title>Analysis of the Rickettsia africae genome reveals that virulence acquisition in Rickettsia species may be explained by genome reduction.</title>
        <authorList>
            <person name="Fournier P.-E."/>
            <person name="El Karkouri K."/>
            <person name="Leroy Q."/>
            <person name="Robert C."/>
            <person name="Giumelli B."/>
            <person name="Renesto P."/>
            <person name="Socolovschi C."/>
            <person name="Parola P."/>
            <person name="Audic S."/>
            <person name="Raoult D."/>
        </authorList>
    </citation>
    <scope>NUCLEOTIDE SEQUENCE [LARGE SCALE GENOMIC DNA]</scope>
    <source>
        <strain>ESF-5</strain>
    </source>
</reference>